<name>GHRB_ECOSM</name>
<comment type="function">
    <text evidence="1">Catalyzes the NADPH-dependent reduction of glyoxylate and hydroxypyruvate into glycolate and glycerate, respectively.</text>
</comment>
<comment type="catalytic activity">
    <reaction evidence="1">
        <text>glycolate + NADP(+) = glyoxylate + NADPH + H(+)</text>
        <dbReference type="Rhea" id="RHEA:10992"/>
        <dbReference type="ChEBI" id="CHEBI:15378"/>
        <dbReference type="ChEBI" id="CHEBI:29805"/>
        <dbReference type="ChEBI" id="CHEBI:36655"/>
        <dbReference type="ChEBI" id="CHEBI:57783"/>
        <dbReference type="ChEBI" id="CHEBI:58349"/>
        <dbReference type="EC" id="1.1.1.79"/>
    </reaction>
</comment>
<comment type="catalytic activity">
    <reaction evidence="1">
        <text>(R)-glycerate + NAD(+) = 3-hydroxypyruvate + NADH + H(+)</text>
        <dbReference type="Rhea" id="RHEA:17905"/>
        <dbReference type="ChEBI" id="CHEBI:15378"/>
        <dbReference type="ChEBI" id="CHEBI:16659"/>
        <dbReference type="ChEBI" id="CHEBI:17180"/>
        <dbReference type="ChEBI" id="CHEBI:57540"/>
        <dbReference type="ChEBI" id="CHEBI:57945"/>
        <dbReference type="EC" id="1.1.1.81"/>
    </reaction>
</comment>
<comment type="catalytic activity">
    <reaction evidence="1">
        <text>(R)-glycerate + NADP(+) = 3-hydroxypyruvate + NADPH + H(+)</text>
        <dbReference type="Rhea" id="RHEA:18657"/>
        <dbReference type="ChEBI" id="CHEBI:15378"/>
        <dbReference type="ChEBI" id="CHEBI:16659"/>
        <dbReference type="ChEBI" id="CHEBI:17180"/>
        <dbReference type="ChEBI" id="CHEBI:57783"/>
        <dbReference type="ChEBI" id="CHEBI:58349"/>
        <dbReference type="EC" id="1.1.1.81"/>
    </reaction>
</comment>
<comment type="subunit">
    <text evidence="1">Homodimer.</text>
</comment>
<comment type="subcellular location">
    <subcellularLocation>
        <location evidence="1">Cytoplasm</location>
    </subcellularLocation>
</comment>
<comment type="similarity">
    <text evidence="1">Belongs to the D-isomer specific 2-hydroxyacid dehydrogenase family. GhrB subfamily.</text>
</comment>
<organism>
    <name type="scientific">Escherichia coli (strain SMS-3-5 / SECEC)</name>
    <dbReference type="NCBI Taxonomy" id="439855"/>
    <lineage>
        <taxon>Bacteria</taxon>
        <taxon>Pseudomonadati</taxon>
        <taxon>Pseudomonadota</taxon>
        <taxon>Gammaproteobacteria</taxon>
        <taxon>Enterobacterales</taxon>
        <taxon>Enterobacteriaceae</taxon>
        <taxon>Escherichia</taxon>
    </lineage>
</organism>
<reference key="1">
    <citation type="journal article" date="2008" name="J. Bacteriol.">
        <title>Insights into the environmental resistance gene pool from the genome sequence of the multidrug-resistant environmental isolate Escherichia coli SMS-3-5.</title>
        <authorList>
            <person name="Fricke W.F."/>
            <person name="Wright M.S."/>
            <person name="Lindell A.H."/>
            <person name="Harkins D.M."/>
            <person name="Baker-Austin C."/>
            <person name="Ravel J."/>
            <person name="Stepanauskas R."/>
        </authorList>
    </citation>
    <scope>NUCLEOTIDE SEQUENCE [LARGE SCALE GENOMIC DNA]</scope>
    <source>
        <strain>SMS-3-5 / SECEC</strain>
    </source>
</reference>
<gene>
    <name evidence="1" type="primary">ghrB</name>
    <name type="ordered locus">EcSMS35_3874</name>
</gene>
<evidence type="ECO:0000255" key="1">
    <source>
        <dbReference type="HAMAP-Rule" id="MF_01667"/>
    </source>
</evidence>
<dbReference type="EC" id="1.1.1.79" evidence="1"/>
<dbReference type="EC" id="1.1.1.81" evidence="1"/>
<dbReference type="EMBL" id="CP000970">
    <property type="protein sequence ID" value="ACB16053.1"/>
    <property type="molecule type" value="Genomic_DNA"/>
</dbReference>
<dbReference type="RefSeq" id="WP_000805033.1">
    <property type="nucleotide sequence ID" value="NC_010498.1"/>
</dbReference>
<dbReference type="SMR" id="B1LJB3"/>
<dbReference type="KEGG" id="ecm:EcSMS35_3874"/>
<dbReference type="HOGENOM" id="CLU_019796_1_2_6"/>
<dbReference type="Proteomes" id="UP000007011">
    <property type="component" value="Chromosome"/>
</dbReference>
<dbReference type="GO" id="GO:0005829">
    <property type="term" value="C:cytosol"/>
    <property type="evidence" value="ECO:0007669"/>
    <property type="project" value="TreeGrafter"/>
</dbReference>
<dbReference type="GO" id="GO:0005886">
    <property type="term" value="C:plasma membrane"/>
    <property type="evidence" value="ECO:0007669"/>
    <property type="project" value="UniProtKB-UniRule"/>
</dbReference>
<dbReference type="GO" id="GO:0030267">
    <property type="term" value="F:glyoxylate reductase (NADPH) activity"/>
    <property type="evidence" value="ECO:0007669"/>
    <property type="project" value="UniProtKB-UniRule"/>
</dbReference>
<dbReference type="GO" id="GO:0008465">
    <property type="term" value="F:hydroxypyruvate reductase (NADH) activity"/>
    <property type="evidence" value="ECO:0007669"/>
    <property type="project" value="RHEA"/>
</dbReference>
<dbReference type="GO" id="GO:0120509">
    <property type="term" value="F:hydroxypyruvate reductase (NADPH) activity"/>
    <property type="evidence" value="ECO:0007669"/>
    <property type="project" value="RHEA"/>
</dbReference>
<dbReference type="GO" id="GO:0051287">
    <property type="term" value="F:NAD binding"/>
    <property type="evidence" value="ECO:0007669"/>
    <property type="project" value="InterPro"/>
</dbReference>
<dbReference type="CDD" id="cd05301">
    <property type="entry name" value="GDH"/>
    <property type="match status" value="1"/>
</dbReference>
<dbReference type="FunFam" id="3.40.50.720:FF:000026">
    <property type="entry name" value="Glyoxylate/hydroxypyruvate reductase B"/>
    <property type="match status" value="1"/>
</dbReference>
<dbReference type="Gene3D" id="3.40.50.720">
    <property type="entry name" value="NAD(P)-binding Rossmann-like Domain"/>
    <property type="match status" value="2"/>
</dbReference>
<dbReference type="HAMAP" id="MF_01667">
    <property type="entry name" value="2_Hacid_dh_C_GhrB"/>
    <property type="match status" value="1"/>
</dbReference>
<dbReference type="InterPro" id="IPR050223">
    <property type="entry name" value="D-isomer_2-hydroxyacid_DH"/>
</dbReference>
<dbReference type="InterPro" id="IPR006139">
    <property type="entry name" value="D-isomer_2_OHA_DH_cat_dom"/>
</dbReference>
<dbReference type="InterPro" id="IPR029753">
    <property type="entry name" value="D-isomer_DH_CS"/>
</dbReference>
<dbReference type="InterPro" id="IPR006140">
    <property type="entry name" value="D-isomer_DH_NAD-bd"/>
</dbReference>
<dbReference type="InterPro" id="IPR023756">
    <property type="entry name" value="Glyo/OHPyrv_Rdtase_B"/>
</dbReference>
<dbReference type="InterPro" id="IPR036291">
    <property type="entry name" value="NAD(P)-bd_dom_sf"/>
</dbReference>
<dbReference type="NCBIfam" id="NF011938">
    <property type="entry name" value="PRK15409.1"/>
    <property type="match status" value="1"/>
</dbReference>
<dbReference type="PANTHER" id="PTHR10996">
    <property type="entry name" value="2-HYDROXYACID DEHYDROGENASE-RELATED"/>
    <property type="match status" value="1"/>
</dbReference>
<dbReference type="PANTHER" id="PTHR10996:SF283">
    <property type="entry name" value="GLYOXYLATE_HYDROXYPYRUVATE REDUCTASE B"/>
    <property type="match status" value="1"/>
</dbReference>
<dbReference type="Pfam" id="PF00389">
    <property type="entry name" value="2-Hacid_dh"/>
    <property type="match status" value="1"/>
</dbReference>
<dbReference type="Pfam" id="PF02826">
    <property type="entry name" value="2-Hacid_dh_C"/>
    <property type="match status" value="1"/>
</dbReference>
<dbReference type="SUPFAM" id="SSF52283">
    <property type="entry name" value="Formate/glycerate dehydrogenase catalytic domain-like"/>
    <property type="match status" value="1"/>
</dbReference>
<dbReference type="SUPFAM" id="SSF51735">
    <property type="entry name" value="NAD(P)-binding Rossmann-fold domains"/>
    <property type="match status" value="1"/>
</dbReference>
<dbReference type="PROSITE" id="PS00670">
    <property type="entry name" value="D_2_HYDROXYACID_DH_2"/>
    <property type="match status" value="1"/>
</dbReference>
<dbReference type="PROSITE" id="PS00671">
    <property type="entry name" value="D_2_HYDROXYACID_DH_3"/>
    <property type="match status" value="1"/>
</dbReference>
<sequence length="324" mass="35387">MKPSVILYKALPDDLLQRLQEHFTVHQVANLSPQTVEQNAAIFAEAEGLLGSNENVDAALLEKMPKLRATSTISVGYDNFDVDALTARKILLMHTPTVLTETVADTLMALVLSTARRVVEVAERVKAGEWTASIGPDWYGTDVHHKTLGIVGMGRIGMALAQRAQFGFNMPILYNARRHHKEAEERFNARYCDLDTLLQESDFVCLILPLTDETHHLFGAEQFAKMKSSAIFINAGRGPVVDENALIAALQKGEIHAAGLDVFEQEPLSVDSPLLSMANVVAVPHIGSATHETRYGMAACAVDNLIDALQGKVEKNCVNPHVAD</sequence>
<feature type="chain" id="PRO_0000348385" description="Glyoxylate/hydroxypyruvate reductase B">
    <location>
        <begin position="1"/>
        <end position="324"/>
    </location>
</feature>
<feature type="active site" evidence="1">
    <location>
        <position position="237"/>
    </location>
</feature>
<feature type="active site" evidence="1">
    <location>
        <position position="266"/>
    </location>
</feature>
<feature type="active site" description="Proton donor" evidence="1">
    <location>
        <position position="285"/>
    </location>
</feature>
<accession>B1LJB3</accession>
<proteinExistence type="inferred from homology"/>
<protein>
    <recommendedName>
        <fullName evidence="1">Glyoxylate/hydroxypyruvate reductase B</fullName>
        <ecNumber evidence="1">1.1.1.79</ecNumber>
        <ecNumber evidence="1">1.1.1.81</ecNumber>
    </recommendedName>
</protein>
<keyword id="KW-0963">Cytoplasm</keyword>
<keyword id="KW-0520">NAD</keyword>
<keyword id="KW-0521">NADP</keyword>
<keyword id="KW-0560">Oxidoreductase</keyword>